<comment type="function">
    <text evidence="1">Catalyzes the attachment of tyrosine to tRNA(Tyr) in a two-step reaction: tyrosine is first activated by ATP to form Tyr-AMP and then transferred to the acceptor end of tRNA(Tyr).</text>
</comment>
<comment type="catalytic activity">
    <reaction evidence="1">
        <text>tRNA(Tyr) + L-tyrosine + ATP = L-tyrosyl-tRNA(Tyr) + AMP + diphosphate + H(+)</text>
        <dbReference type="Rhea" id="RHEA:10220"/>
        <dbReference type="Rhea" id="RHEA-COMP:9706"/>
        <dbReference type="Rhea" id="RHEA-COMP:9707"/>
        <dbReference type="ChEBI" id="CHEBI:15378"/>
        <dbReference type="ChEBI" id="CHEBI:30616"/>
        <dbReference type="ChEBI" id="CHEBI:33019"/>
        <dbReference type="ChEBI" id="CHEBI:58315"/>
        <dbReference type="ChEBI" id="CHEBI:78442"/>
        <dbReference type="ChEBI" id="CHEBI:78536"/>
        <dbReference type="ChEBI" id="CHEBI:456215"/>
        <dbReference type="EC" id="6.1.1.1"/>
    </reaction>
</comment>
<comment type="subunit">
    <text evidence="1">Homodimer.</text>
</comment>
<comment type="subcellular location">
    <subcellularLocation>
        <location evidence="1">Cytoplasm</location>
    </subcellularLocation>
</comment>
<comment type="similarity">
    <text evidence="1">Belongs to the class-I aminoacyl-tRNA synthetase family. TyrS type 2 subfamily.</text>
</comment>
<accession>Q7MAH6</accession>
<name>SYY_WOLSU</name>
<keyword id="KW-0030">Aminoacyl-tRNA synthetase</keyword>
<keyword id="KW-0067">ATP-binding</keyword>
<keyword id="KW-0963">Cytoplasm</keyword>
<keyword id="KW-0436">Ligase</keyword>
<keyword id="KW-0547">Nucleotide-binding</keyword>
<keyword id="KW-0648">Protein biosynthesis</keyword>
<keyword id="KW-1185">Reference proteome</keyword>
<keyword id="KW-0694">RNA-binding</keyword>
<reference key="1">
    <citation type="journal article" date="2003" name="Proc. Natl. Acad. Sci. U.S.A.">
        <title>Complete genome sequence and analysis of Wolinella succinogenes.</title>
        <authorList>
            <person name="Baar C."/>
            <person name="Eppinger M."/>
            <person name="Raddatz G."/>
            <person name="Simon J."/>
            <person name="Lanz C."/>
            <person name="Klimmek O."/>
            <person name="Nandakumar R."/>
            <person name="Gross R."/>
            <person name="Rosinus A."/>
            <person name="Keller H."/>
            <person name="Jagtap P."/>
            <person name="Linke B."/>
            <person name="Meyer F."/>
            <person name="Lederer H."/>
            <person name="Schuster S.C."/>
        </authorList>
    </citation>
    <scope>NUCLEOTIDE SEQUENCE [LARGE SCALE GENOMIC DNA]</scope>
    <source>
        <strain>ATCC 29543 / DSM 1740 / CCUG 13145 / JCM 31913 / LMG 7466 / NCTC 11488 / FDC 602W</strain>
    </source>
</reference>
<dbReference type="EC" id="6.1.1.1" evidence="1"/>
<dbReference type="EMBL" id="BX571657">
    <property type="protein sequence ID" value="CAE09397.1"/>
    <property type="molecule type" value="Genomic_DNA"/>
</dbReference>
<dbReference type="RefSeq" id="WP_011138197.1">
    <property type="nucleotide sequence ID" value="NC_005090.1"/>
</dbReference>
<dbReference type="SMR" id="Q7MAH6"/>
<dbReference type="STRING" id="273121.WS0241"/>
<dbReference type="KEGG" id="wsu:WS0241"/>
<dbReference type="eggNOG" id="COG0162">
    <property type="taxonomic scope" value="Bacteria"/>
</dbReference>
<dbReference type="HOGENOM" id="CLU_024003_5_0_7"/>
<dbReference type="Proteomes" id="UP000000422">
    <property type="component" value="Chromosome"/>
</dbReference>
<dbReference type="GO" id="GO:0005829">
    <property type="term" value="C:cytosol"/>
    <property type="evidence" value="ECO:0007669"/>
    <property type="project" value="TreeGrafter"/>
</dbReference>
<dbReference type="GO" id="GO:0005524">
    <property type="term" value="F:ATP binding"/>
    <property type="evidence" value="ECO:0007669"/>
    <property type="project" value="UniProtKB-UniRule"/>
</dbReference>
<dbReference type="GO" id="GO:0003723">
    <property type="term" value="F:RNA binding"/>
    <property type="evidence" value="ECO:0007669"/>
    <property type="project" value="UniProtKB-KW"/>
</dbReference>
<dbReference type="GO" id="GO:0004831">
    <property type="term" value="F:tyrosine-tRNA ligase activity"/>
    <property type="evidence" value="ECO:0007669"/>
    <property type="project" value="UniProtKB-UniRule"/>
</dbReference>
<dbReference type="GO" id="GO:0006437">
    <property type="term" value="P:tyrosyl-tRNA aminoacylation"/>
    <property type="evidence" value="ECO:0007669"/>
    <property type="project" value="UniProtKB-UniRule"/>
</dbReference>
<dbReference type="CDD" id="cd00165">
    <property type="entry name" value="S4"/>
    <property type="match status" value="1"/>
</dbReference>
<dbReference type="CDD" id="cd00805">
    <property type="entry name" value="TyrRS_core"/>
    <property type="match status" value="1"/>
</dbReference>
<dbReference type="FunFam" id="1.10.240.10:FF:000006">
    <property type="entry name" value="Tyrosine--tRNA ligase"/>
    <property type="match status" value="1"/>
</dbReference>
<dbReference type="FunFam" id="3.40.50.620:FF:000061">
    <property type="entry name" value="Tyrosine--tRNA ligase"/>
    <property type="match status" value="1"/>
</dbReference>
<dbReference type="Gene3D" id="3.40.50.620">
    <property type="entry name" value="HUPs"/>
    <property type="match status" value="1"/>
</dbReference>
<dbReference type="Gene3D" id="3.10.290.10">
    <property type="entry name" value="RNA-binding S4 domain"/>
    <property type="match status" value="1"/>
</dbReference>
<dbReference type="Gene3D" id="1.10.240.10">
    <property type="entry name" value="Tyrosyl-Transfer RNA Synthetase"/>
    <property type="match status" value="1"/>
</dbReference>
<dbReference type="HAMAP" id="MF_02007">
    <property type="entry name" value="Tyr_tRNA_synth_type2"/>
    <property type="match status" value="1"/>
</dbReference>
<dbReference type="InterPro" id="IPR001412">
    <property type="entry name" value="aa-tRNA-synth_I_CS"/>
</dbReference>
<dbReference type="InterPro" id="IPR002305">
    <property type="entry name" value="aa-tRNA-synth_Ic"/>
</dbReference>
<dbReference type="InterPro" id="IPR014729">
    <property type="entry name" value="Rossmann-like_a/b/a_fold"/>
</dbReference>
<dbReference type="InterPro" id="IPR002942">
    <property type="entry name" value="S4_RNA-bd"/>
</dbReference>
<dbReference type="InterPro" id="IPR036986">
    <property type="entry name" value="S4_RNA-bd_sf"/>
</dbReference>
<dbReference type="InterPro" id="IPR054608">
    <property type="entry name" value="SYY-like_C"/>
</dbReference>
<dbReference type="InterPro" id="IPR002307">
    <property type="entry name" value="Tyr-tRNA-ligase"/>
</dbReference>
<dbReference type="InterPro" id="IPR024088">
    <property type="entry name" value="Tyr-tRNA-ligase_bac-type"/>
</dbReference>
<dbReference type="InterPro" id="IPR024108">
    <property type="entry name" value="Tyr-tRNA-ligase_bac_2"/>
</dbReference>
<dbReference type="NCBIfam" id="TIGR00234">
    <property type="entry name" value="tyrS"/>
    <property type="match status" value="1"/>
</dbReference>
<dbReference type="PANTHER" id="PTHR11766:SF1">
    <property type="entry name" value="TYROSINE--TRNA LIGASE"/>
    <property type="match status" value="1"/>
</dbReference>
<dbReference type="PANTHER" id="PTHR11766">
    <property type="entry name" value="TYROSYL-TRNA SYNTHETASE"/>
    <property type="match status" value="1"/>
</dbReference>
<dbReference type="Pfam" id="PF22421">
    <property type="entry name" value="SYY_C-terminal"/>
    <property type="match status" value="1"/>
</dbReference>
<dbReference type="Pfam" id="PF00579">
    <property type="entry name" value="tRNA-synt_1b"/>
    <property type="match status" value="1"/>
</dbReference>
<dbReference type="PRINTS" id="PR01040">
    <property type="entry name" value="TRNASYNTHTYR"/>
</dbReference>
<dbReference type="SMART" id="SM00363">
    <property type="entry name" value="S4"/>
    <property type="match status" value="1"/>
</dbReference>
<dbReference type="SUPFAM" id="SSF55174">
    <property type="entry name" value="Alpha-L RNA-binding motif"/>
    <property type="match status" value="1"/>
</dbReference>
<dbReference type="SUPFAM" id="SSF52374">
    <property type="entry name" value="Nucleotidylyl transferase"/>
    <property type="match status" value="1"/>
</dbReference>
<dbReference type="PROSITE" id="PS00178">
    <property type="entry name" value="AA_TRNA_LIGASE_I"/>
    <property type="match status" value="1"/>
</dbReference>
<dbReference type="PROSITE" id="PS50889">
    <property type="entry name" value="S4"/>
    <property type="match status" value="1"/>
</dbReference>
<evidence type="ECO:0000255" key="1">
    <source>
        <dbReference type="HAMAP-Rule" id="MF_02007"/>
    </source>
</evidence>
<organism>
    <name type="scientific">Wolinella succinogenes (strain ATCC 29543 / DSM 1740 / CCUG 13145 / JCM 31913 / LMG 7466 / NCTC 11488 / FDC 602W)</name>
    <name type="common">Vibrio succinogenes</name>
    <dbReference type="NCBI Taxonomy" id="273121"/>
    <lineage>
        <taxon>Bacteria</taxon>
        <taxon>Pseudomonadati</taxon>
        <taxon>Campylobacterota</taxon>
        <taxon>Epsilonproteobacteria</taxon>
        <taxon>Campylobacterales</taxon>
        <taxon>Helicobacteraceae</taxon>
        <taxon>Wolinella</taxon>
    </lineage>
</organism>
<protein>
    <recommendedName>
        <fullName evidence="1">Tyrosine--tRNA ligase</fullName>
        <ecNumber evidence="1">6.1.1.1</ecNumber>
    </recommendedName>
    <alternativeName>
        <fullName evidence="1">Tyrosyl-tRNA synthetase</fullName>
        <shortName evidence="1">TyrRS</shortName>
    </alternativeName>
</protein>
<gene>
    <name evidence="1" type="primary">tyrS</name>
    <name type="ordered locus">WS0241</name>
</gene>
<proteinExistence type="inferred from homology"/>
<feature type="chain" id="PRO_0000236780" description="Tyrosine--tRNA ligase">
    <location>
        <begin position="1"/>
        <end position="406"/>
    </location>
</feature>
<feature type="domain" description="S4 RNA-binding" evidence="1">
    <location>
        <begin position="345"/>
        <end position="405"/>
    </location>
</feature>
<feature type="short sequence motif" description="'HIGH' region">
    <location>
        <begin position="51"/>
        <end position="60"/>
    </location>
</feature>
<feature type="short sequence motif" description="'KMSKS' region">
    <location>
        <begin position="236"/>
        <end position="240"/>
    </location>
</feature>
<feature type="binding site" evidence="1">
    <location>
        <position position="239"/>
    </location>
    <ligand>
        <name>ATP</name>
        <dbReference type="ChEBI" id="CHEBI:30616"/>
    </ligand>
</feature>
<sequence length="406" mass="46062">MQEGIEVRVQEAMREIARGVNEIIGIEYIQSLVERYYKSGETFSIKAGFDPTAPDLHLGHTVLIQKMATFQKHGAIVTFLIGDYTAMIGDPTGKSETRKPLTREQVLQNAQSYQDQVFKILDPQKTVIRFNSEWLEKLGTAGMIELTAKFSVARMLERDDFEKRYKSQTPISLVEFIYPLLQGYDSVALESDVEFGGTDQKFNLLMGRHLQRSYGLKKEQSVLMVPILEGLDGVQKMSKSLGNYIGVTEEPNTMYAKVLSVSDELMWRYYELLSAKSLDEIHKLQEDVKSGNYHPKKAKEDLALEITTRYHSEQDALQAKEEFDKVFARDEIPSEMPELGVTGEIWICKAMVEGGISPSTSQARRDIQAGSVKINQTKVEDINQQLGHGEHIIQVGKRKFLRLIVK</sequence>